<sequence>MFDFQHQLKILPDKPGVYIMKNSLGEVIYVGKAKVLKNRVRQYFQNSKNHSEKVRAMVKNIAEFEYIVTDSEMEALILECNLIKKYSPRYNIALKDDKFYPFIKITTNEDFPRVYVTRNFAKDGNRYFGPYTNGTAVYEVMGLIKKLFPLRTCKKAIVEGGEPTRACLNYHINLCKAPCAGYISKAEYWEMIDEIINILNGTDTSIIKKLKLEMEKAAEELEFEKAAKIRDRILAIELISEKQKMFTVKEGDEDFIDLYTDEKDGCAQVFFVREGKVTGREHFMIENISDDPVKEVISSFIASFYGGTAQIPKTIYVPEEIEDQELIEKFLTEKRGSKVWIKVPKKGDKKNLLDMVRNNAKIMLDQFKEKMVEEKELNKSALTELADVLGLDSLPARIEAYDISNIQGVDSVGTMVVFENGKAKNSDYRRFKIKSVKGPNDYESMREILSRRFSHGLEEVNKIKERNLEYSKGKFCIFPDLIMMDGGKGQVNIALEVLKDFGIEIPVCGLVKDHKHRTRGIIFNNEEILIRRGSGLMNLITRVQDEVHRYAITYHRSLRDKRTLHSILEDIPRIGEKRRRNLLMKFGSIDNIKKASMEELLDTPGIDKRAAESIKQYFSS</sequence>
<keyword id="KW-0963">Cytoplasm</keyword>
<keyword id="KW-0227">DNA damage</keyword>
<keyword id="KW-0228">DNA excision</keyword>
<keyword id="KW-0234">DNA repair</keyword>
<keyword id="KW-0267">Excision nuclease</keyword>
<keyword id="KW-0742">SOS response</keyword>
<protein>
    <recommendedName>
        <fullName evidence="1">UvrABC system protein C</fullName>
        <shortName evidence="1">Protein UvrC</shortName>
    </recommendedName>
    <alternativeName>
        <fullName evidence="1">Excinuclease ABC subunit C</fullName>
    </alternativeName>
</protein>
<name>UVRC_CLOP1</name>
<feature type="chain" id="PRO_0000264885" description="UvrABC system protein C">
    <location>
        <begin position="1"/>
        <end position="620"/>
    </location>
</feature>
<feature type="domain" description="GIY-YIG" evidence="1">
    <location>
        <begin position="13"/>
        <end position="92"/>
    </location>
</feature>
<feature type="domain" description="UVR" evidence="1">
    <location>
        <begin position="204"/>
        <end position="239"/>
    </location>
</feature>
<dbReference type="EMBL" id="CP000246">
    <property type="protein sequence ID" value="ABG83959.1"/>
    <property type="molecule type" value="Genomic_DNA"/>
</dbReference>
<dbReference type="RefSeq" id="WP_003458095.1">
    <property type="nucleotide sequence ID" value="NC_008261.1"/>
</dbReference>
<dbReference type="SMR" id="Q0TU89"/>
<dbReference type="STRING" id="195103.CPF_0341"/>
<dbReference type="PaxDb" id="195103-CPF_0341"/>
<dbReference type="GeneID" id="93003313"/>
<dbReference type="KEGG" id="cpf:CPF_0341"/>
<dbReference type="eggNOG" id="COG0322">
    <property type="taxonomic scope" value="Bacteria"/>
</dbReference>
<dbReference type="HOGENOM" id="CLU_014841_3_2_9"/>
<dbReference type="Proteomes" id="UP000001823">
    <property type="component" value="Chromosome"/>
</dbReference>
<dbReference type="GO" id="GO:0005737">
    <property type="term" value="C:cytoplasm"/>
    <property type="evidence" value="ECO:0007669"/>
    <property type="project" value="UniProtKB-SubCell"/>
</dbReference>
<dbReference type="GO" id="GO:0009380">
    <property type="term" value="C:excinuclease repair complex"/>
    <property type="evidence" value="ECO:0007669"/>
    <property type="project" value="InterPro"/>
</dbReference>
<dbReference type="GO" id="GO:0003677">
    <property type="term" value="F:DNA binding"/>
    <property type="evidence" value="ECO:0007669"/>
    <property type="project" value="UniProtKB-UniRule"/>
</dbReference>
<dbReference type="GO" id="GO:0009381">
    <property type="term" value="F:excinuclease ABC activity"/>
    <property type="evidence" value="ECO:0007669"/>
    <property type="project" value="UniProtKB-UniRule"/>
</dbReference>
<dbReference type="GO" id="GO:0006289">
    <property type="term" value="P:nucleotide-excision repair"/>
    <property type="evidence" value="ECO:0007669"/>
    <property type="project" value="UniProtKB-UniRule"/>
</dbReference>
<dbReference type="GO" id="GO:0009432">
    <property type="term" value="P:SOS response"/>
    <property type="evidence" value="ECO:0007669"/>
    <property type="project" value="UniProtKB-UniRule"/>
</dbReference>
<dbReference type="CDD" id="cd10434">
    <property type="entry name" value="GIY-YIG_UvrC_Cho"/>
    <property type="match status" value="1"/>
</dbReference>
<dbReference type="FunFam" id="3.40.1440.10:FF:000001">
    <property type="entry name" value="UvrABC system protein C"/>
    <property type="match status" value="1"/>
</dbReference>
<dbReference type="Gene3D" id="1.10.150.20">
    <property type="entry name" value="5' to 3' exonuclease, C-terminal subdomain"/>
    <property type="match status" value="1"/>
</dbReference>
<dbReference type="Gene3D" id="3.40.1440.10">
    <property type="entry name" value="GIY-YIG endonuclease"/>
    <property type="match status" value="1"/>
</dbReference>
<dbReference type="Gene3D" id="4.10.860.10">
    <property type="entry name" value="UVR domain"/>
    <property type="match status" value="1"/>
</dbReference>
<dbReference type="Gene3D" id="3.30.420.340">
    <property type="entry name" value="UvrC, RNAse H endonuclease domain"/>
    <property type="match status" value="1"/>
</dbReference>
<dbReference type="HAMAP" id="MF_00203">
    <property type="entry name" value="UvrC"/>
    <property type="match status" value="1"/>
</dbReference>
<dbReference type="InterPro" id="IPR041663">
    <property type="entry name" value="DisA/LigA_HHH"/>
</dbReference>
<dbReference type="InterPro" id="IPR000305">
    <property type="entry name" value="GIY-YIG_endonuc"/>
</dbReference>
<dbReference type="InterPro" id="IPR035901">
    <property type="entry name" value="GIY-YIG_endonuc_sf"/>
</dbReference>
<dbReference type="InterPro" id="IPR047296">
    <property type="entry name" value="GIY-YIG_UvrC_Cho"/>
</dbReference>
<dbReference type="InterPro" id="IPR010994">
    <property type="entry name" value="RuvA_2-like"/>
</dbReference>
<dbReference type="InterPro" id="IPR001943">
    <property type="entry name" value="UVR_dom"/>
</dbReference>
<dbReference type="InterPro" id="IPR036876">
    <property type="entry name" value="UVR_dom_sf"/>
</dbReference>
<dbReference type="InterPro" id="IPR050066">
    <property type="entry name" value="UvrABC_protein_C"/>
</dbReference>
<dbReference type="InterPro" id="IPR004791">
    <property type="entry name" value="UvrC"/>
</dbReference>
<dbReference type="InterPro" id="IPR001162">
    <property type="entry name" value="UvrC_RNase_H_dom"/>
</dbReference>
<dbReference type="InterPro" id="IPR038476">
    <property type="entry name" value="UvrC_RNase_H_dom_sf"/>
</dbReference>
<dbReference type="NCBIfam" id="NF001824">
    <property type="entry name" value="PRK00558.1-5"/>
    <property type="match status" value="1"/>
</dbReference>
<dbReference type="NCBIfam" id="TIGR00194">
    <property type="entry name" value="uvrC"/>
    <property type="match status" value="1"/>
</dbReference>
<dbReference type="PANTHER" id="PTHR30562:SF1">
    <property type="entry name" value="UVRABC SYSTEM PROTEIN C"/>
    <property type="match status" value="1"/>
</dbReference>
<dbReference type="PANTHER" id="PTHR30562">
    <property type="entry name" value="UVRC/OXIDOREDUCTASE"/>
    <property type="match status" value="1"/>
</dbReference>
<dbReference type="Pfam" id="PF01541">
    <property type="entry name" value="GIY-YIG"/>
    <property type="match status" value="1"/>
</dbReference>
<dbReference type="Pfam" id="PF12826">
    <property type="entry name" value="HHH_2"/>
    <property type="match status" value="1"/>
</dbReference>
<dbReference type="Pfam" id="PF02151">
    <property type="entry name" value="UVR"/>
    <property type="match status" value="1"/>
</dbReference>
<dbReference type="Pfam" id="PF22920">
    <property type="entry name" value="UvrC_RNaseH"/>
    <property type="match status" value="1"/>
</dbReference>
<dbReference type="Pfam" id="PF08459">
    <property type="entry name" value="UvrC_RNaseH_dom"/>
    <property type="match status" value="1"/>
</dbReference>
<dbReference type="SMART" id="SM00465">
    <property type="entry name" value="GIYc"/>
    <property type="match status" value="1"/>
</dbReference>
<dbReference type="SUPFAM" id="SSF46600">
    <property type="entry name" value="C-terminal UvrC-binding domain of UvrB"/>
    <property type="match status" value="1"/>
</dbReference>
<dbReference type="SUPFAM" id="SSF82771">
    <property type="entry name" value="GIY-YIG endonuclease"/>
    <property type="match status" value="1"/>
</dbReference>
<dbReference type="SUPFAM" id="SSF47781">
    <property type="entry name" value="RuvA domain 2-like"/>
    <property type="match status" value="1"/>
</dbReference>
<dbReference type="PROSITE" id="PS50164">
    <property type="entry name" value="GIY_YIG"/>
    <property type="match status" value="1"/>
</dbReference>
<dbReference type="PROSITE" id="PS50151">
    <property type="entry name" value="UVR"/>
    <property type="match status" value="1"/>
</dbReference>
<dbReference type="PROSITE" id="PS50165">
    <property type="entry name" value="UVRC"/>
    <property type="match status" value="1"/>
</dbReference>
<evidence type="ECO:0000255" key="1">
    <source>
        <dbReference type="HAMAP-Rule" id="MF_00203"/>
    </source>
</evidence>
<proteinExistence type="inferred from homology"/>
<accession>Q0TU89</accession>
<comment type="function">
    <text evidence="1">The UvrABC repair system catalyzes the recognition and processing of DNA lesions. UvrC both incises the 5' and 3' sides of the lesion. The N-terminal half is responsible for the 3' incision and the C-terminal half is responsible for the 5' incision.</text>
</comment>
<comment type="subunit">
    <text evidence="1">Interacts with UvrB in an incision complex.</text>
</comment>
<comment type="subcellular location">
    <subcellularLocation>
        <location evidence="1">Cytoplasm</location>
    </subcellularLocation>
</comment>
<comment type="similarity">
    <text evidence="1">Belongs to the UvrC family.</text>
</comment>
<reference key="1">
    <citation type="journal article" date="2006" name="Genome Res.">
        <title>Skewed genomic variability in strains of the toxigenic bacterial pathogen, Clostridium perfringens.</title>
        <authorList>
            <person name="Myers G.S.A."/>
            <person name="Rasko D.A."/>
            <person name="Cheung J.K."/>
            <person name="Ravel J."/>
            <person name="Seshadri R."/>
            <person name="DeBoy R.T."/>
            <person name="Ren Q."/>
            <person name="Varga J."/>
            <person name="Awad M.M."/>
            <person name="Brinkac L.M."/>
            <person name="Daugherty S.C."/>
            <person name="Haft D.H."/>
            <person name="Dodson R.J."/>
            <person name="Madupu R."/>
            <person name="Nelson W.C."/>
            <person name="Rosovitz M.J."/>
            <person name="Sullivan S.A."/>
            <person name="Khouri H."/>
            <person name="Dimitrov G.I."/>
            <person name="Watkins K.L."/>
            <person name="Mulligan S."/>
            <person name="Benton J."/>
            <person name="Radune D."/>
            <person name="Fisher D.J."/>
            <person name="Atkins H.S."/>
            <person name="Hiscox T."/>
            <person name="Jost B.H."/>
            <person name="Billington S.J."/>
            <person name="Songer J.G."/>
            <person name="McClane B.A."/>
            <person name="Titball R.W."/>
            <person name="Rood J.I."/>
            <person name="Melville S.B."/>
            <person name="Paulsen I.T."/>
        </authorList>
    </citation>
    <scope>NUCLEOTIDE SEQUENCE [LARGE SCALE GENOMIC DNA]</scope>
    <source>
        <strain>ATCC 13124 / DSM 756 / JCM 1290 / NCIMB 6125 / NCTC 8237 / S 107 / Type A</strain>
    </source>
</reference>
<organism>
    <name type="scientific">Clostridium perfringens (strain ATCC 13124 / DSM 756 / JCM 1290 / NCIMB 6125 / NCTC 8237 / Type A)</name>
    <dbReference type="NCBI Taxonomy" id="195103"/>
    <lineage>
        <taxon>Bacteria</taxon>
        <taxon>Bacillati</taxon>
        <taxon>Bacillota</taxon>
        <taxon>Clostridia</taxon>
        <taxon>Eubacteriales</taxon>
        <taxon>Clostridiaceae</taxon>
        <taxon>Clostridium</taxon>
    </lineage>
</organism>
<gene>
    <name evidence="1" type="primary">uvrC</name>
    <name type="ordered locus">CPF_0341</name>
</gene>